<organism>
    <name type="scientific">Salmonella dublin (strain CT_02021853)</name>
    <dbReference type="NCBI Taxonomy" id="439851"/>
    <lineage>
        <taxon>Bacteria</taxon>
        <taxon>Pseudomonadati</taxon>
        <taxon>Pseudomonadota</taxon>
        <taxon>Gammaproteobacteria</taxon>
        <taxon>Enterobacterales</taxon>
        <taxon>Enterobacteriaceae</taxon>
        <taxon>Salmonella</taxon>
    </lineage>
</organism>
<sequence length="152" mass="16168">MMKKIDVKILDPRVGQQFPLPTYATSGSAGLDLRACLDDAVELAPGATTLVPTGLAIHIADPSLAAVMLPRSGLGHKHGIVLGNLVGLIDSDYQGQLMVSIWNRGQDSFTIEPGERIAQMVFVPVVQAEFNLVEAFDATERGEGGFGHSGRK</sequence>
<name>DUT_SALDC</name>
<proteinExistence type="inferred from homology"/>
<gene>
    <name evidence="1" type="primary">dut</name>
    <name type="ordered locus">SeD_A4118</name>
</gene>
<evidence type="ECO:0000255" key="1">
    <source>
        <dbReference type="HAMAP-Rule" id="MF_00116"/>
    </source>
</evidence>
<keyword id="KW-0378">Hydrolase</keyword>
<keyword id="KW-0460">Magnesium</keyword>
<keyword id="KW-0479">Metal-binding</keyword>
<keyword id="KW-0546">Nucleotide metabolism</keyword>
<comment type="function">
    <text evidence="1">This enzyme is involved in nucleotide metabolism: it produces dUMP, the immediate precursor of thymidine nucleotides and it decreases the intracellular concentration of dUTP so that uracil cannot be incorporated into DNA.</text>
</comment>
<comment type="catalytic activity">
    <reaction evidence="1">
        <text>dUTP + H2O = dUMP + diphosphate + H(+)</text>
        <dbReference type="Rhea" id="RHEA:10248"/>
        <dbReference type="ChEBI" id="CHEBI:15377"/>
        <dbReference type="ChEBI" id="CHEBI:15378"/>
        <dbReference type="ChEBI" id="CHEBI:33019"/>
        <dbReference type="ChEBI" id="CHEBI:61555"/>
        <dbReference type="ChEBI" id="CHEBI:246422"/>
        <dbReference type="EC" id="3.6.1.23"/>
    </reaction>
</comment>
<comment type="cofactor">
    <cofactor evidence="1">
        <name>Mg(2+)</name>
        <dbReference type="ChEBI" id="CHEBI:18420"/>
    </cofactor>
</comment>
<comment type="pathway">
    <text evidence="1">Pyrimidine metabolism; dUMP biosynthesis; dUMP from dCTP (dUTP route): step 2/2.</text>
</comment>
<comment type="similarity">
    <text evidence="1">Belongs to the dUTPase family.</text>
</comment>
<accession>B5FM63</accession>
<feature type="chain" id="PRO_1000094987" description="Deoxyuridine 5'-triphosphate nucleotidohydrolase">
    <location>
        <begin position="1"/>
        <end position="152"/>
    </location>
</feature>
<feature type="binding site" evidence="1">
    <location>
        <begin position="71"/>
        <end position="73"/>
    </location>
    <ligand>
        <name>substrate</name>
    </ligand>
</feature>
<feature type="binding site" evidence="1">
    <location>
        <position position="84"/>
    </location>
    <ligand>
        <name>substrate</name>
    </ligand>
</feature>
<feature type="binding site" evidence="1">
    <location>
        <begin position="88"/>
        <end position="90"/>
    </location>
    <ligand>
        <name>substrate</name>
    </ligand>
</feature>
<feature type="binding site" evidence="1">
    <location>
        <position position="98"/>
    </location>
    <ligand>
        <name>substrate</name>
    </ligand>
</feature>
<dbReference type="EC" id="3.6.1.23" evidence="1"/>
<dbReference type="EMBL" id="CP001144">
    <property type="protein sequence ID" value="ACH77025.1"/>
    <property type="molecule type" value="Genomic_DNA"/>
</dbReference>
<dbReference type="RefSeq" id="WP_000976078.1">
    <property type="nucleotide sequence ID" value="NC_011205.1"/>
</dbReference>
<dbReference type="SMR" id="B5FM63"/>
<dbReference type="KEGG" id="sed:SeD_A4118"/>
<dbReference type="HOGENOM" id="CLU_068508_1_1_6"/>
<dbReference type="UniPathway" id="UPA00610">
    <property type="reaction ID" value="UER00666"/>
</dbReference>
<dbReference type="Proteomes" id="UP000008322">
    <property type="component" value="Chromosome"/>
</dbReference>
<dbReference type="GO" id="GO:0004170">
    <property type="term" value="F:dUTP diphosphatase activity"/>
    <property type="evidence" value="ECO:0007669"/>
    <property type="project" value="UniProtKB-UniRule"/>
</dbReference>
<dbReference type="GO" id="GO:0000287">
    <property type="term" value="F:magnesium ion binding"/>
    <property type="evidence" value="ECO:0007669"/>
    <property type="project" value="UniProtKB-UniRule"/>
</dbReference>
<dbReference type="GO" id="GO:0006226">
    <property type="term" value="P:dUMP biosynthetic process"/>
    <property type="evidence" value="ECO:0007669"/>
    <property type="project" value="UniProtKB-UniRule"/>
</dbReference>
<dbReference type="GO" id="GO:0046081">
    <property type="term" value="P:dUTP catabolic process"/>
    <property type="evidence" value="ECO:0007669"/>
    <property type="project" value="InterPro"/>
</dbReference>
<dbReference type="CDD" id="cd07557">
    <property type="entry name" value="trimeric_dUTPase"/>
    <property type="match status" value="1"/>
</dbReference>
<dbReference type="FunFam" id="2.70.40.10:FF:000002">
    <property type="entry name" value="dUTP diphosphatase"/>
    <property type="match status" value="1"/>
</dbReference>
<dbReference type="Gene3D" id="2.70.40.10">
    <property type="match status" value="1"/>
</dbReference>
<dbReference type="HAMAP" id="MF_00116">
    <property type="entry name" value="dUTPase_bact"/>
    <property type="match status" value="1"/>
</dbReference>
<dbReference type="InterPro" id="IPR008181">
    <property type="entry name" value="dUTPase"/>
</dbReference>
<dbReference type="InterPro" id="IPR029054">
    <property type="entry name" value="dUTPase-like"/>
</dbReference>
<dbReference type="InterPro" id="IPR036157">
    <property type="entry name" value="dUTPase-like_sf"/>
</dbReference>
<dbReference type="InterPro" id="IPR033704">
    <property type="entry name" value="dUTPase_trimeric"/>
</dbReference>
<dbReference type="NCBIfam" id="TIGR00576">
    <property type="entry name" value="dut"/>
    <property type="match status" value="1"/>
</dbReference>
<dbReference type="NCBIfam" id="NF001862">
    <property type="entry name" value="PRK00601.1"/>
    <property type="match status" value="1"/>
</dbReference>
<dbReference type="PANTHER" id="PTHR11241">
    <property type="entry name" value="DEOXYURIDINE 5'-TRIPHOSPHATE NUCLEOTIDOHYDROLASE"/>
    <property type="match status" value="1"/>
</dbReference>
<dbReference type="PANTHER" id="PTHR11241:SF0">
    <property type="entry name" value="DEOXYURIDINE 5'-TRIPHOSPHATE NUCLEOTIDOHYDROLASE"/>
    <property type="match status" value="1"/>
</dbReference>
<dbReference type="Pfam" id="PF00692">
    <property type="entry name" value="dUTPase"/>
    <property type="match status" value="1"/>
</dbReference>
<dbReference type="SUPFAM" id="SSF51283">
    <property type="entry name" value="dUTPase-like"/>
    <property type="match status" value="1"/>
</dbReference>
<reference key="1">
    <citation type="journal article" date="2011" name="J. Bacteriol.">
        <title>Comparative genomics of 28 Salmonella enterica isolates: evidence for CRISPR-mediated adaptive sublineage evolution.</title>
        <authorList>
            <person name="Fricke W.F."/>
            <person name="Mammel M.K."/>
            <person name="McDermott P.F."/>
            <person name="Tartera C."/>
            <person name="White D.G."/>
            <person name="Leclerc J.E."/>
            <person name="Ravel J."/>
            <person name="Cebula T.A."/>
        </authorList>
    </citation>
    <scope>NUCLEOTIDE SEQUENCE [LARGE SCALE GENOMIC DNA]</scope>
    <source>
        <strain>CT_02021853</strain>
    </source>
</reference>
<protein>
    <recommendedName>
        <fullName evidence="1">Deoxyuridine 5'-triphosphate nucleotidohydrolase</fullName>
        <shortName evidence="1">dUTPase</shortName>
        <ecNumber evidence="1">3.6.1.23</ecNumber>
    </recommendedName>
    <alternativeName>
        <fullName evidence="1">dUTP pyrophosphatase</fullName>
    </alternativeName>
</protein>